<feature type="chain" id="PRO_0000301044" description="Peptide deformylase">
    <location>
        <begin position="1"/>
        <end position="184"/>
    </location>
</feature>
<feature type="active site" evidence="1">
    <location>
        <position position="155"/>
    </location>
</feature>
<feature type="binding site" evidence="1">
    <location>
        <position position="111"/>
    </location>
    <ligand>
        <name>Fe cation</name>
        <dbReference type="ChEBI" id="CHEBI:24875"/>
    </ligand>
</feature>
<feature type="binding site" evidence="1">
    <location>
        <position position="154"/>
    </location>
    <ligand>
        <name>Fe cation</name>
        <dbReference type="ChEBI" id="CHEBI:24875"/>
    </ligand>
</feature>
<feature type="binding site" evidence="1">
    <location>
        <position position="158"/>
    </location>
    <ligand>
        <name>Fe cation</name>
        <dbReference type="ChEBI" id="CHEBI:24875"/>
    </ligand>
</feature>
<protein>
    <recommendedName>
        <fullName evidence="1">Peptide deformylase</fullName>
        <shortName evidence="1">PDF</shortName>
        <ecNumber evidence="1">3.5.1.88</ecNumber>
    </recommendedName>
    <alternativeName>
        <fullName evidence="1">Polypeptide deformylase</fullName>
    </alternativeName>
</protein>
<dbReference type="EC" id="3.5.1.88" evidence="1"/>
<dbReference type="EMBL" id="CR954253">
    <property type="protein sequence ID" value="CAI97589.1"/>
    <property type="molecule type" value="Genomic_DNA"/>
</dbReference>
<dbReference type="RefSeq" id="WP_011543785.1">
    <property type="nucleotide sequence ID" value="NZ_JQAV01000001.1"/>
</dbReference>
<dbReference type="SMR" id="Q1GAR4"/>
<dbReference type="STRING" id="390333.Ldb0762"/>
<dbReference type="KEGG" id="ldb:Ldb0762"/>
<dbReference type="eggNOG" id="COG0242">
    <property type="taxonomic scope" value="Bacteria"/>
</dbReference>
<dbReference type="HOGENOM" id="CLU_061901_4_0_9"/>
<dbReference type="BioCyc" id="LDEL390333:LDB_RS03355-MONOMER"/>
<dbReference type="Proteomes" id="UP000001259">
    <property type="component" value="Chromosome"/>
</dbReference>
<dbReference type="GO" id="GO:0046872">
    <property type="term" value="F:metal ion binding"/>
    <property type="evidence" value="ECO:0007669"/>
    <property type="project" value="UniProtKB-KW"/>
</dbReference>
<dbReference type="GO" id="GO:0042586">
    <property type="term" value="F:peptide deformylase activity"/>
    <property type="evidence" value="ECO:0007669"/>
    <property type="project" value="UniProtKB-UniRule"/>
</dbReference>
<dbReference type="GO" id="GO:0043686">
    <property type="term" value="P:co-translational protein modification"/>
    <property type="evidence" value="ECO:0007669"/>
    <property type="project" value="TreeGrafter"/>
</dbReference>
<dbReference type="GO" id="GO:0006412">
    <property type="term" value="P:translation"/>
    <property type="evidence" value="ECO:0007669"/>
    <property type="project" value="UniProtKB-UniRule"/>
</dbReference>
<dbReference type="CDD" id="cd00487">
    <property type="entry name" value="Pep_deformylase"/>
    <property type="match status" value="1"/>
</dbReference>
<dbReference type="FunFam" id="3.90.45.10:FF:000002">
    <property type="entry name" value="Peptide deformylase"/>
    <property type="match status" value="1"/>
</dbReference>
<dbReference type="Gene3D" id="3.90.45.10">
    <property type="entry name" value="Peptide deformylase"/>
    <property type="match status" value="1"/>
</dbReference>
<dbReference type="HAMAP" id="MF_00163">
    <property type="entry name" value="Pep_deformylase"/>
    <property type="match status" value="1"/>
</dbReference>
<dbReference type="InterPro" id="IPR023635">
    <property type="entry name" value="Peptide_deformylase"/>
</dbReference>
<dbReference type="InterPro" id="IPR036821">
    <property type="entry name" value="Peptide_deformylase_sf"/>
</dbReference>
<dbReference type="NCBIfam" id="TIGR00079">
    <property type="entry name" value="pept_deformyl"/>
    <property type="match status" value="1"/>
</dbReference>
<dbReference type="PANTHER" id="PTHR10458">
    <property type="entry name" value="PEPTIDE DEFORMYLASE"/>
    <property type="match status" value="1"/>
</dbReference>
<dbReference type="PANTHER" id="PTHR10458:SF8">
    <property type="entry name" value="PEPTIDE DEFORMYLASE 2"/>
    <property type="match status" value="1"/>
</dbReference>
<dbReference type="Pfam" id="PF01327">
    <property type="entry name" value="Pep_deformylase"/>
    <property type="match status" value="1"/>
</dbReference>
<dbReference type="PIRSF" id="PIRSF004749">
    <property type="entry name" value="Pep_def"/>
    <property type="match status" value="1"/>
</dbReference>
<dbReference type="PRINTS" id="PR01576">
    <property type="entry name" value="PDEFORMYLASE"/>
</dbReference>
<dbReference type="SUPFAM" id="SSF56420">
    <property type="entry name" value="Peptide deformylase"/>
    <property type="match status" value="1"/>
</dbReference>
<sequence>MILMKDIVRDGDPVLRQVAQKLTFPLSDHYRKLADDMMEYLVNSQDPKIAAKHQLRAGVGLAAPQVGEGVSMAALLVPDDKGEIIFKEVYVNPEIISESVRKTCLSEGEGCLSVDKVIDGYVPRPNKVTVHYWTVDGEEKTIRLKGYPAIVSGHEIDHLNGHLFYDRINKENPFALDEDTIVIY</sequence>
<evidence type="ECO:0000255" key="1">
    <source>
        <dbReference type="HAMAP-Rule" id="MF_00163"/>
    </source>
</evidence>
<gene>
    <name evidence="1" type="primary">def</name>
    <name type="ordered locus">Ldb0762</name>
</gene>
<reference key="1">
    <citation type="journal article" date="2006" name="Proc. Natl. Acad. Sci. U.S.A.">
        <title>The complete genome sequence of Lactobacillus bulgaricus reveals extensive and ongoing reductive evolution.</title>
        <authorList>
            <person name="van de Guchte M."/>
            <person name="Penaud S."/>
            <person name="Grimaldi C."/>
            <person name="Barbe V."/>
            <person name="Bryson K."/>
            <person name="Nicolas P."/>
            <person name="Robert C."/>
            <person name="Oztas S."/>
            <person name="Mangenot S."/>
            <person name="Couloux A."/>
            <person name="Loux V."/>
            <person name="Dervyn R."/>
            <person name="Bossy R."/>
            <person name="Bolotin A."/>
            <person name="Batto J.-M."/>
            <person name="Walunas T."/>
            <person name="Gibrat J.-F."/>
            <person name="Bessieres P."/>
            <person name="Weissenbach J."/>
            <person name="Ehrlich S.D."/>
            <person name="Maguin E."/>
        </authorList>
    </citation>
    <scope>NUCLEOTIDE SEQUENCE [LARGE SCALE GENOMIC DNA]</scope>
    <source>
        <strain>ATCC 11842 / DSM 20081 / BCRC 10696 / JCM 1002 / NBRC 13953 / NCIMB 11778 / NCTC 12712 / WDCM 00102 / Lb 14</strain>
    </source>
</reference>
<accession>Q1GAR4</accession>
<name>DEF_LACDA</name>
<keyword id="KW-0378">Hydrolase</keyword>
<keyword id="KW-0408">Iron</keyword>
<keyword id="KW-0479">Metal-binding</keyword>
<keyword id="KW-0648">Protein biosynthesis</keyword>
<keyword id="KW-1185">Reference proteome</keyword>
<comment type="function">
    <text evidence="1">Removes the formyl group from the N-terminal Met of newly synthesized proteins. Requires at least a dipeptide for an efficient rate of reaction. N-terminal L-methionine is a prerequisite for activity but the enzyme has broad specificity at other positions.</text>
</comment>
<comment type="catalytic activity">
    <reaction evidence="1">
        <text>N-terminal N-formyl-L-methionyl-[peptide] + H2O = N-terminal L-methionyl-[peptide] + formate</text>
        <dbReference type="Rhea" id="RHEA:24420"/>
        <dbReference type="Rhea" id="RHEA-COMP:10639"/>
        <dbReference type="Rhea" id="RHEA-COMP:10640"/>
        <dbReference type="ChEBI" id="CHEBI:15377"/>
        <dbReference type="ChEBI" id="CHEBI:15740"/>
        <dbReference type="ChEBI" id="CHEBI:49298"/>
        <dbReference type="ChEBI" id="CHEBI:64731"/>
        <dbReference type="EC" id="3.5.1.88"/>
    </reaction>
</comment>
<comment type="cofactor">
    <cofactor evidence="1">
        <name>Fe(2+)</name>
        <dbReference type="ChEBI" id="CHEBI:29033"/>
    </cofactor>
    <text evidence="1">Binds 1 Fe(2+) ion.</text>
</comment>
<comment type="similarity">
    <text evidence="1">Belongs to the polypeptide deformylase family.</text>
</comment>
<proteinExistence type="inferred from homology"/>
<organism>
    <name type="scientific">Lactobacillus delbrueckii subsp. bulgaricus (strain ATCC 11842 / DSM 20081 / BCRC 10696 / JCM 1002 / NBRC 13953 / NCIMB 11778 / NCTC 12712 / WDCM 00102 / Lb 14)</name>
    <dbReference type="NCBI Taxonomy" id="390333"/>
    <lineage>
        <taxon>Bacteria</taxon>
        <taxon>Bacillati</taxon>
        <taxon>Bacillota</taxon>
        <taxon>Bacilli</taxon>
        <taxon>Lactobacillales</taxon>
        <taxon>Lactobacillaceae</taxon>
        <taxon>Lactobacillus</taxon>
    </lineage>
</organism>